<keyword id="KW-0143">Chaperone</keyword>
<keyword id="KW-0963">Cytoplasm</keyword>
<keyword id="KW-0694">RNA-binding</keyword>
<name>PROQ_ECOSE</name>
<gene>
    <name evidence="1" type="primary">proQ</name>
    <name type="ordered locus">ECSE_2006</name>
</gene>
<organism>
    <name type="scientific">Escherichia coli (strain SE11)</name>
    <dbReference type="NCBI Taxonomy" id="409438"/>
    <lineage>
        <taxon>Bacteria</taxon>
        <taxon>Pseudomonadati</taxon>
        <taxon>Pseudomonadota</taxon>
        <taxon>Gammaproteobacteria</taxon>
        <taxon>Enterobacterales</taxon>
        <taxon>Enterobacteriaceae</taxon>
        <taxon>Escherichia</taxon>
    </lineage>
</organism>
<comment type="function">
    <text evidence="1">RNA chaperone with significant RNA binding, RNA strand exchange and RNA duplexing activities. May regulate ProP activity through an RNA-based, post-transcriptional mechanism.</text>
</comment>
<comment type="subcellular location">
    <subcellularLocation>
        <location evidence="1">Cytoplasm</location>
    </subcellularLocation>
</comment>
<comment type="similarity">
    <text evidence="1">Belongs to the ProQ family.</text>
</comment>
<accession>B6IBQ9</accession>
<feature type="chain" id="PRO_1000133295" description="RNA chaperone ProQ">
    <location>
        <begin position="1"/>
        <end position="232"/>
    </location>
</feature>
<feature type="region of interest" description="Disordered" evidence="2">
    <location>
        <begin position="105"/>
        <end position="182"/>
    </location>
</feature>
<feature type="compositionally biased region" description="Basic and acidic residues" evidence="2">
    <location>
        <begin position="117"/>
        <end position="136"/>
    </location>
</feature>
<feature type="compositionally biased region" description="Basic residues" evidence="2">
    <location>
        <begin position="137"/>
        <end position="146"/>
    </location>
</feature>
<feature type="compositionally biased region" description="Basic and acidic residues" evidence="2">
    <location>
        <begin position="147"/>
        <end position="177"/>
    </location>
</feature>
<dbReference type="EMBL" id="AP009240">
    <property type="protein sequence ID" value="BAG77530.1"/>
    <property type="molecule type" value="Genomic_DNA"/>
</dbReference>
<dbReference type="RefSeq" id="WP_000431370.1">
    <property type="nucleotide sequence ID" value="NC_011415.1"/>
</dbReference>
<dbReference type="SMR" id="B6IBQ9"/>
<dbReference type="GeneID" id="93776081"/>
<dbReference type="KEGG" id="ecy:ECSE_2006"/>
<dbReference type="HOGENOM" id="CLU_113254_0_0_6"/>
<dbReference type="Proteomes" id="UP000008199">
    <property type="component" value="Chromosome"/>
</dbReference>
<dbReference type="GO" id="GO:0005829">
    <property type="term" value="C:cytosol"/>
    <property type="evidence" value="ECO:0007669"/>
    <property type="project" value="TreeGrafter"/>
</dbReference>
<dbReference type="GO" id="GO:0033592">
    <property type="term" value="F:RNA strand annealing activity"/>
    <property type="evidence" value="ECO:0007669"/>
    <property type="project" value="UniProtKB-UniRule"/>
</dbReference>
<dbReference type="GO" id="GO:0034057">
    <property type="term" value="F:RNA strand-exchange activity"/>
    <property type="evidence" value="ECO:0007669"/>
    <property type="project" value="UniProtKB-UniRule"/>
</dbReference>
<dbReference type="GO" id="GO:0010608">
    <property type="term" value="P:post-transcriptional regulation of gene expression"/>
    <property type="evidence" value="ECO:0007669"/>
    <property type="project" value="InterPro"/>
</dbReference>
<dbReference type="FunFam" id="1.10.1710.10:FF:000001">
    <property type="entry name" value="RNA chaperone ProQ"/>
    <property type="match status" value="1"/>
</dbReference>
<dbReference type="Gene3D" id="1.10.1710.10">
    <property type="entry name" value="ProQ/FinO domain"/>
    <property type="match status" value="1"/>
</dbReference>
<dbReference type="HAMAP" id="MF_00749">
    <property type="entry name" value="ProQ"/>
    <property type="match status" value="1"/>
</dbReference>
<dbReference type="InterPro" id="IPR023529">
    <property type="entry name" value="ProQ"/>
</dbReference>
<dbReference type="InterPro" id="IPR016103">
    <property type="entry name" value="ProQ/FinO"/>
</dbReference>
<dbReference type="InterPro" id="IPR036442">
    <property type="entry name" value="ProQ/FinO_sf"/>
</dbReference>
<dbReference type="InterPro" id="IPR035236">
    <property type="entry name" value="ProQ_C"/>
</dbReference>
<dbReference type="NCBIfam" id="NF003434">
    <property type="entry name" value="PRK04950.1"/>
    <property type="match status" value="1"/>
</dbReference>
<dbReference type="PANTHER" id="PTHR38106">
    <property type="entry name" value="RNA CHAPERONE PROQ"/>
    <property type="match status" value="1"/>
</dbReference>
<dbReference type="PANTHER" id="PTHR38106:SF1">
    <property type="entry name" value="RNA CHAPERONE PROQ"/>
    <property type="match status" value="1"/>
</dbReference>
<dbReference type="Pfam" id="PF04352">
    <property type="entry name" value="ProQ"/>
    <property type="match status" value="1"/>
</dbReference>
<dbReference type="Pfam" id="PF17516">
    <property type="entry name" value="ProQ_C"/>
    <property type="match status" value="1"/>
</dbReference>
<dbReference type="SMART" id="SM00945">
    <property type="entry name" value="ProQ"/>
    <property type="match status" value="1"/>
</dbReference>
<dbReference type="SUPFAM" id="SSF48657">
    <property type="entry name" value="FinO-like"/>
    <property type="match status" value="1"/>
</dbReference>
<reference key="1">
    <citation type="journal article" date="2008" name="DNA Res.">
        <title>Complete genome sequence and comparative analysis of the wild-type commensal Escherichia coli strain SE11 isolated from a healthy adult.</title>
        <authorList>
            <person name="Oshima K."/>
            <person name="Toh H."/>
            <person name="Ogura Y."/>
            <person name="Sasamoto H."/>
            <person name="Morita H."/>
            <person name="Park S.-H."/>
            <person name="Ooka T."/>
            <person name="Iyoda S."/>
            <person name="Taylor T.D."/>
            <person name="Hayashi T."/>
            <person name="Itoh K."/>
            <person name="Hattori M."/>
        </authorList>
    </citation>
    <scope>NUCLEOTIDE SEQUENCE [LARGE SCALE GENOMIC DNA]</scope>
    <source>
        <strain>SE11</strain>
    </source>
</reference>
<proteinExistence type="inferred from homology"/>
<sequence>MENQPKLNSSKEVIAFLAERFPHCFSAEGEARPLKIGIFQDLVDRVAGEMNLSKTQLRSALRLYTSSWRYLYGVKPGATRVDLDGNPCGELDEQHVEHARKQLEEAKARVQAQRAEQQAKKREAAAAAGEKEDAPRRERKPRPTTPRRKEGAERKPRAQKPVEKAPKTVKAPREEQHTPVSDISALTVGQALKVKAGQNAMDATVLEITKDGVRVQLNSGMSLIVRAEHLVF</sequence>
<protein>
    <recommendedName>
        <fullName evidence="1">RNA chaperone ProQ</fullName>
    </recommendedName>
</protein>
<evidence type="ECO:0000255" key="1">
    <source>
        <dbReference type="HAMAP-Rule" id="MF_00749"/>
    </source>
</evidence>
<evidence type="ECO:0000256" key="2">
    <source>
        <dbReference type="SAM" id="MobiDB-lite"/>
    </source>
</evidence>